<reference key="1">
    <citation type="journal article" date="2007" name="BMC Microbiol.">
        <title>Subtle genetic changes enhance virulence of methicillin resistant and sensitive Staphylococcus aureus.</title>
        <authorList>
            <person name="Highlander S.K."/>
            <person name="Hulten K.G."/>
            <person name="Qin X."/>
            <person name="Jiang H."/>
            <person name="Yerrapragada S."/>
            <person name="Mason E.O. Jr."/>
            <person name="Shang Y."/>
            <person name="Williams T.M."/>
            <person name="Fortunov R.M."/>
            <person name="Liu Y."/>
            <person name="Igboeli O."/>
            <person name="Petrosino J."/>
            <person name="Tirumalai M."/>
            <person name="Uzman A."/>
            <person name="Fox G.E."/>
            <person name="Cardenas A.M."/>
            <person name="Muzny D.M."/>
            <person name="Hemphill L."/>
            <person name="Ding Y."/>
            <person name="Dugan S."/>
            <person name="Blyth P.R."/>
            <person name="Buhay C.J."/>
            <person name="Dinh H.H."/>
            <person name="Hawes A.C."/>
            <person name="Holder M."/>
            <person name="Kovar C.L."/>
            <person name="Lee S.L."/>
            <person name="Liu W."/>
            <person name="Nazareth L.V."/>
            <person name="Wang Q."/>
            <person name="Zhou J."/>
            <person name="Kaplan S.L."/>
            <person name="Weinstock G.M."/>
        </authorList>
    </citation>
    <scope>NUCLEOTIDE SEQUENCE [LARGE SCALE GENOMIC DNA]</scope>
    <source>
        <strain>USA300 / TCH1516</strain>
    </source>
</reference>
<proteinExistence type="inferred from homology"/>
<gene>
    <name evidence="1" type="primary">accD</name>
    <name type="ordered locus">USA300HOU_1687</name>
</gene>
<evidence type="ECO:0000255" key="1">
    <source>
        <dbReference type="HAMAP-Rule" id="MF_01395"/>
    </source>
</evidence>
<evidence type="ECO:0000255" key="2">
    <source>
        <dbReference type="PROSITE-ProRule" id="PRU01136"/>
    </source>
</evidence>
<comment type="function">
    <text evidence="1">Component of the acetyl coenzyme A carboxylase (ACC) complex. Biotin carboxylase (BC) catalyzes the carboxylation of biotin on its carrier protein (BCCP) and then the CO(2) group is transferred by the transcarboxylase to acetyl-CoA to form malonyl-CoA.</text>
</comment>
<comment type="catalytic activity">
    <reaction evidence="1">
        <text>N(6)-carboxybiotinyl-L-lysyl-[protein] + acetyl-CoA = N(6)-biotinyl-L-lysyl-[protein] + malonyl-CoA</text>
        <dbReference type="Rhea" id="RHEA:54728"/>
        <dbReference type="Rhea" id="RHEA-COMP:10505"/>
        <dbReference type="Rhea" id="RHEA-COMP:10506"/>
        <dbReference type="ChEBI" id="CHEBI:57288"/>
        <dbReference type="ChEBI" id="CHEBI:57384"/>
        <dbReference type="ChEBI" id="CHEBI:83144"/>
        <dbReference type="ChEBI" id="CHEBI:83145"/>
        <dbReference type="EC" id="2.1.3.15"/>
    </reaction>
</comment>
<comment type="cofactor">
    <cofactor evidence="1">
        <name>Zn(2+)</name>
        <dbReference type="ChEBI" id="CHEBI:29105"/>
    </cofactor>
    <text evidence="1">Binds 1 zinc ion per subunit.</text>
</comment>
<comment type="pathway">
    <text evidence="1">Lipid metabolism; malonyl-CoA biosynthesis; malonyl-CoA from acetyl-CoA: step 1/1.</text>
</comment>
<comment type="subunit">
    <text evidence="1">Acetyl-CoA carboxylase is a heterohexamer composed of biotin carboxyl carrier protein (AccB), biotin carboxylase (AccC) and two subunits each of ACCase subunit alpha (AccA) and ACCase subunit beta (AccD).</text>
</comment>
<comment type="subcellular location">
    <subcellularLocation>
        <location evidence="1">Cytoplasm</location>
    </subcellularLocation>
</comment>
<comment type="similarity">
    <text evidence="1">Belongs to the AccD/PCCB family.</text>
</comment>
<feature type="chain" id="PRO_0000389859" description="Acetyl-coenzyme A carboxylase carboxyl transferase subunit beta">
    <location>
        <begin position="1"/>
        <end position="285"/>
    </location>
</feature>
<feature type="domain" description="CoA carboxyltransferase N-terminal" evidence="2">
    <location>
        <begin position="29"/>
        <end position="285"/>
    </location>
</feature>
<feature type="zinc finger region" description="C4-type" evidence="1">
    <location>
        <begin position="33"/>
        <end position="55"/>
    </location>
</feature>
<feature type="binding site" evidence="1">
    <location>
        <position position="33"/>
    </location>
    <ligand>
        <name>Zn(2+)</name>
        <dbReference type="ChEBI" id="CHEBI:29105"/>
    </ligand>
</feature>
<feature type="binding site" evidence="1">
    <location>
        <position position="36"/>
    </location>
    <ligand>
        <name>Zn(2+)</name>
        <dbReference type="ChEBI" id="CHEBI:29105"/>
    </ligand>
</feature>
<feature type="binding site" evidence="1">
    <location>
        <position position="52"/>
    </location>
    <ligand>
        <name>Zn(2+)</name>
        <dbReference type="ChEBI" id="CHEBI:29105"/>
    </ligand>
</feature>
<feature type="binding site" evidence="1">
    <location>
        <position position="55"/>
    </location>
    <ligand>
        <name>Zn(2+)</name>
        <dbReference type="ChEBI" id="CHEBI:29105"/>
    </ligand>
</feature>
<sequence>MFKDFFNRTKKKKYLTVQDSKNNDVPAGIMTKCPKCKKIMYTKELAENLNVCFNCDHHIALTAYKRIEAISDEGSFTEFDKGMTSANPLDFPSYLEKIEKDQQKTGLKEAVVTGTAQLDGMKFGVAVMDSRFRMGSMGSVIGEKICRIIDYCTENRLPFILFSASGGARMQEGIISLMQMGKTSVSLKRHSDAGLLYISYLTHPTTGGVSASFASVGDINLSEPKALIGFAGRRVIEQTINEKLPDDFQTAEFLLEHGQLDKVVHRNDMRQTLSEILKIHQEVTK</sequence>
<keyword id="KW-0067">ATP-binding</keyword>
<keyword id="KW-0963">Cytoplasm</keyword>
<keyword id="KW-0275">Fatty acid biosynthesis</keyword>
<keyword id="KW-0276">Fatty acid metabolism</keyword>
<keyword id="KW-0444">Lipid biosynthesis</keyword>
<keyword id="KW-0443">Lipid metabolism</keyword>
<keyword id="KW-0479">Metal-binding</keyword>
<keyword id="KW-0547">Nucleotide-binding</keyword>
<keyword id="KW-0808">Transferase</keyword>
<keyword id="KW-0862">Zinc</keyword>
<keyword id="KW-0863">Zinc-finger</keyword>
<organism>
    <name type="scientific">Staphylococcus aureus (strain USA300 / TCH1516)</name>
    <dbReference type="NCBI Taxonomy" id="451516"/>
    <lineage>
        <taxon>Bacteria</taxon>
        <taxon>Bacillati</taxon>
        <taxon>Bacillota</taxon>
        <taxon>Bacilli</taxon>
        <taxon>Bacillales</taxon>
        <taxon>Staphylococcaceae</taxon>
        <taxon>Staphylococcus</taxon>
    </lineage>
</organism>
<dbReference type="EC" id="2.1.3.15" evidence="1"/>
<dbReference type="EMBL" id="CP000730">
    <property type="protein sequence ID" value="ABX29694.1"/>
    <property type="molecule type" value="Genomic_DNA"/>
</dbReference>
<dbReference type="RefSeq" id="WP_000471571.1">
    <property type="nucleotide sequence ID" value="NC_010079.1"/>
</dbReference>
<dbReference type="SMR" id="A8Z2L6"/>
<dbReference type="KEGG" id="sax:USA300HOU_1687"/>
<dbReference type="HOGENOM" id="CLU_015486_1_0_9"/>
<dbReference type="UniPathway" id="UPA00655">
    <property type="reaction ID" value="UER00711"/>
</dbReference>
<dbReference type="GO" id="GO:0009317">
    <property type="term" value="C:acetyl-CoA carboxylase complex"/>
    <property type="evidence" value="ECO:0007669"/>
    <property type="project" value="InterPro"/>
</dbReference>
<dbReference type="GO" id="GO:0003989">
    <property type="term" value="F:acetyl-CoA carboxylase activity"/>
    <property type="evidence" value="ECO:0007669"/>
    <property type="project" value="InterPro"/>
</dbReference>
<dbReference type="GO" id="GO:0005524">
    <property type="term" value="F:ATP binding"/>
    <property type="evidence" value="ECO:0007669"/>
    <property type="project" value="UniProtKB-KW"/>
</dbReference>
<dbReference type="GO" id="GO:0016743">
    <property type="term" value="F:carboxyl- or carbamoyltransferase activity"/>
    <property type="evidence" value="ECO:0007669"/>
    <property type="project" value="UniProtKB-UniRule"/>
</dbReference>
<dbReference type="GO" id="GO:0008270">
    <property type="term" value="F:zinc ion binding"/>
    <property type="evidence" value="ECO:0007669"/>
    <property type="project" value="UniProtKB-UniRule"/>
</dbReference>
<dbReference type="GO" id="GO:0006633">
    <property type="term" value="P:fatty acid biosynthetic process"/>
    <property type="evidence" value="ECO:0007669"/>
    <property type="project" value="UniProtKB-KW"/>
</dbReference>
<dbReference type="GO" id="GO:2001295">
    <property type="term" value="P:malonyl-CoA biosynthetic process"/>
    <property type="evidence" value="ECO:0007669"/>
    <property type="project" value="UniProtKB-UniRule"/>
</dbReference>
<dbReference type="Gene3D" id="3.90.226.10">
    <property type="entry name" value="2-enoyl-CoA Hydratase, Chain A, domain 1"/>
    <property type="match status" value="1"/>
</dbReference>
<dbReference type="HAMAP" id="MF_01395">
    <property type="entry name" value="AcetylCoA_CT_beta"/>
    <property type="match status" value="1"/>
</dbReference>
<dbReference type="InterPro" id="IPR034733">
    <property type="entry name" value="AcCoA_carboxyl_beta"/>
</dbReference>
<dbReference type="InterPro" id="IPR000438">
    <property type="entry name" value="Acetyl_CoA_COase_Trfase_b_su"/>
</dbReference>
<dbReference type="InterPro" id="IPR029045">
    <property type="entry name" value="ClpP/crotonase-like_dom_sf"/>
</dbReference>
<dbReference type="InterPro" id="IPR011762">
    <property type="entry name" value="COA_CT_N"/>
</dbReference>
<dbReference type="InterPro" id="IPR041010">
    <property type="entry name" value="Znf-ACC"/>
</dbReference>
<dbReference type="NCBIfam" id="TIGR00515">
    <property type="entry name" value="accD"/>
    <property type="match status" value="1"/>
</dbReference>
<dbReference type="PANTHER" id="PTHR42995">
    <property type="entry name" value="ACETYL-COENZYME A CARBOXYLASE CARBOXYL TRANSFERASE SUBUNIT BETA, CHLOROPLASTIC"/>
    <property type="match status" value="1"/>
</dbReference>
<dbReference type="PANTHER" id="PTHR42995:SF5">
    <property type="entry name" value="ACETYL-COENZYME A CARBOXYLASE CARBOXYL TRANSFERASE SUBUNIT BETA, CHLOROPLASTIC"/>
    <property type="match status" value="1"/>
</dbReference>
<dbReference type="Pfam" id="PF01039">
    <property type="entry name" value="Carboxyl_trans"/>
    <property type="match status" value="1"/>
</dbReference>
<dbReference type="Pfam" id="PF17848">
    <property type="entry name" value="Zn_ribbon_ACC"/>
    <property type="match status" value="1"/>
</dbReference>
<dbReference type="PRINTS" id="PR01070">
    <property type="entry name" value="ACCCTRFRASEB"/>
</dbReference>
<dbReference type="SUPFAM" id="SSF52096">
    <property type="entry name" value="ClpP/crotonase"/>
    <property type="match status" value="1"/>
</dbReference>
<dbReference type="PROSITE" id="PS50980">
    <property type="entry name" value="COA_CT_NTER"/>
    <property type="match status" value="1"/>
</dbReference>
<accession>A8Z2L6</accession>
<protein>
    <recommendedName>
        <fullName evidence="1">Acetyl-coenzyme A carboxylase carboxyl transferase subunit beta</fullName>
        <shortName evidence="1">ACCase subunit beta</shortName>
        <shortName evidence="1">Acetyl-CoA carboxylase carboxyltransferase subunit beta</shortName>
        <ecNumber evidence="1">2.1.3.15</ecNumber>
    </recommendedName>
</protein>
<name>ACCD_STAAT</name>